<dbReference type="EC" id="2.7.11.1"/>
<dbReference type="EMBL" id="X64692">
    <property type="status" value="NOT_ANNOTATED_CDS"/>
    <property type="molecule type" value="Genomic_DNA"/>
</dbReference>
<dbReference type="EMBL" id="AY112721">
    <property type="protein sequence ID" value="AAM52224.1"/>
    <property type="molecule type" value="mRNA"/>
</dbReference>
<dbReference type="EMBL" id="CH471064">
    <property type="protein sequence ID" value="EAW68546.1"/>
    <property type="molecule type" value="Genomic_DNA"/>
</dbReference>
<dbReference type="CCDS" id="CCDS59224.1"/>
<dbReference type="RefSeq" id="NP_001243615.1">
    <property type="nucleotide sequence ID" value="NM_001256686.2"/>
</dbReference>
<dbReference type="SMR" id="Q8NEV1"/>
<dbReference type="BioGRID" id="129460">
    <property type="interactions" value="109"/>
</dbReference>
<dbReference type="FunCoup" id="Q8NEV1">
    <property type="interactions" value="1935"/>
</dbReference>
<dbReference type="IntAct" id="Q8NEV1">
    <property type="interactions" value="12"/>
</dbReference>
<dbReference type="MINT" id="Q8NEV1"/>
<dbReference type="STRING" id="9606.ENSP00000473553"/>
<dbReference type="BindingDB" id="Q8NEV1"/>
<dbReference type="ChEMBL" id="CHEMBL3832943"/>
<dbReference type="GlyGen" id="Q8NEV1">
    <property type="glycosylation" value="2 sites, 1 O-linked glycan (1 site)"/>
</dbReference>
<dbReference type="iPTMnet" id="Q8NEV1"/>
<dbReference type="PhosphoSitePlus" id="Q8NEV1"/>
<dbReference type="SwissPalm" id="Q8NEV1"/>
<dbReference type="BioMuta" id="CSNK2A3"/>
<dbReference type="jPOST" id="Q8NEV1"/>
<dbReference type="MassIVE" id="Q8NEV1"/>
<dbReference type="PaxDb" id="9606-ENSP00000473553"/>
<dbReference type="PeptideAtlas" id="Q8NEV1"/>
<dbReference type="Pumba" id="Q8NEV1"/>
<dbReference type="Antibodypedia" id="72367">
    <property type="antibodies" value="12 antibodies from 4 providers"/>
</dbReference>
<dbReference type="DNASU" id="283106"/>
<dbReference type="Ensembl" id="ENST00000528848.3">
    <property type="protein sequence ID" value="ENSP00000473553.1"/>
    <property type="gene ID" value="ENSG00000254598.3"/>
</dbReference>
<dbReference type="GeneID" id="283106"/>
<dbReference type="KEGG" id="hsa:283106"/>
<dbReference type="MANE-Select" id="ENST00000528848.3">
    <property type="protein sequence ID" value="ENSP00000473553.1"/>
    <property type="RefSeq nucleotide sequence ID" value="NM_001256686.2"/>
    <property type="RefSeq protein sequence ID" value="NP_001243615.1"/>
</dbReference>
<dbReference type="UCSC" id="uc001mjp.4">
    <property type="organism name" value="human"/>
</dbReference>
<dbReference type="AGR" id="HGNC:2458"/>
<dbReference type="CTD" id="283106"/>
<dbReference type="DisGeNET" id="283106"/>
<dbReference type="GeneCards" id="CSNK2A3"/>
<dbReference type="HGNC" id="HGNC:2458">
    <property type="gene designation" value="CSNK2A3"/>
</dbReference>
<dbReference type="HPA" id="ENSG00000254598">
    <property type="expression patterns" value="Low tissue specificity"/>
</dbReference>
<dbReference type="neXtProt" id="NX_Q8NEV1"/>
<dbReference type="OpenTargets" id="ENSG00000254598"/>
<dbReference type="VEuPathDB" id="HostDB:ENSG00000254598"/>
<dbReference type="eggNOG" id="KOG0668">
    <property type="taxonomic scope" value="Eukaryota"/>
</dbReference>
<dbReference type="GeneTree" id="ENSGT00390000004215"/>
<dbReference type="HOGENOM" id="CLU_000288_70_4_1"/>
<dbReference type="InParanoid" id="Q8NEV1"/>
<dbReference type="OrthoDB" id="10254671at2759"/>
<dbReference type="PAN-GO" id="Q8NEV1">
    <property type="GO annotations" value="7 GO annotations based on evolutionary models"/>
</dbReference>
<dbReference type="PhylomeDB" id="Q8NEV1"/>
<dbReference type="PathwayCommons" id="Q8NEV1"/>
<dbReference type="SignaLink" id="Q8NEV1"/>
<dbReference type="SIGNOR" id="Q8NEV1"/>
<dbReference type="BioGRID-ORCS" id="283106">
    <property type="hits" value="39 hits in 1112 CRISPR screens"/>
</dbReference>
<dbReference type="GenomeRNAi" id="283106"/>
<dbReference type="Pharos" id="Q8NEV1">
    <property type="development level" value="Tdark"/>
</dbReference>
<dbReference type="PRO" id="PR:Q8NEV1"/>
<dbReference type="Proteomes" id="UP000005640">
    <property type="component" value="Chromosome 11"/>
</dbReference>
<dbReference type="RNAct" id="Q8NEV1">
    <property type="molecule type" value="protein"/>
</dbReference>
<dbReference type="Bgee" id="ENSG00000254598">
    <property type="expression patterns" value="Expressed in primordial germ cell in gonad and 55 other cell types or tissues"/>
</dbReference>
<dbReference type="GO" id="GO:0005829">
    <property type="term" value="C:cytosol"/>
    <property type="evidence" value="ECO:0000318"/>
    <property type="project" value="GO_Central"/>
</dbReference>
<dbReference type="GO" id="GO:0005654">
    <property type="term" value="C:nucleoplasm"/>
    <property type="evidence" value="ECO:0000314"/>
    <property type="project" value="HPA"/>
</dbReference>
<dbReference type="GO" id="GO:0005634">
    <property type="term" value="C:nucleus"/>
    <property type="evidence" value="ECO:0000318"/>
    <property type="project" value="GO_Central"/>
</dbReference>
<dbReference type="GO" id="GO:0005956">
    <property type="term" value="C:protein kinase CK2 complex"/>
    <property type="evidence" value="ECO:0000318"/>
    <property type="project" value="GO_Central"/>
</dbReference>
<dbReference type="GO" id="GO:0005524">
    <property type="term" value="F:ATP binding"/>
    <property type="evidence" value="ECO:0007669"/>
    <property type="project" value="UniProtKB-KW"/>
</dbReference>
<dbReference type="GO" id="GO:0106310">
    <property type="term" value="F:protein serine kinase activity"/>
    <property type="evidence" value="ECO:0007669"/>
    <property type="project" value="RHEA"/>
</dbReference>
<dbReference type="GO" id="GO:0004674">
    <property type="term" value="F:protein serine/threonine kinase activity"/>
    <property type="evidence" value="ECO:0000314"/>
    <property type="project" value="UniProtKB"/>
</dbReference>
<dbReference type="GO" id="GO:0006302">
    <property type="term" value="P:double-strand break repair"/>
    <property type="evidence" value="ECO:0000318"/>
    <property type="project" value="GO_Central"/>
</dbReference>
<dbReference type="GO" id="GO:0030307">
    <property type="term" value="P:positive regulation of cell growth"/>
    <property type="evidence" value="ECO:0000314"/>
    <property type="project" value="UniProtKB"/>
</dbReference>
<dbReference type="GO" id="GO:0008284">
    <property type="term" value="P:positive regulation of cell population proliferation"/>
    <property type="evidence" value="ECO:0000314"/>
    <property type="project" value="UniProtKB"/>
</dbReference>
<dbReference type="GO" id="GO:0045732">
    <property type="term" value="P:positive regulation of protein catabolic process"/>
    <property type="evidence" value="ECO:0000314"/>
    <property type="project" value="UniProtKB"/>
</dbReference>
<dbReference type="GO" id="GO:0006468">
    <property type="term" value="P:protein phosphorylation"/>
    <property type="evidence" value="ECO:0000314"/>
    <property type="project" value="UniProtKB"/>
</dbReference>
<dbReference type="GO" id="GO:0051726">
    <property type="term" value="P:regulation of cell cycle"/>
    <property type="evidence" value="ECO:0000318"/>
    <property type="project" value="GO_Central"/>
</dbReference>
<dbReference type="CDD" id="cd14132">
    <property type="entry name" value="STKc_CK2_alpha"/>
    <property type="match status" value="1"/>
</dbReference>
<dbReference type="FunFam" id="1.10.510.10:FF:000059">
    <property type="entry name" value="Casein kinase II subunit alpha"/>
    <property type="match status" value="1"/>
</dbReference>
<dbReference type="FunFam" id="3.30.200.20:FF:000088">
    <property type="entry name" value="Casein kinase II subunit alpha"/>
    <property type="match status" value="1"/>
</dbReference>
<dbReference type="Gene3D" id="3.30.200.20">
    <property type="entry name" value="Phosphorylase Kinase, domain 1"/>
    <property type="match status" value="1"/>
</dbReference>
<dbReference type="Gene3D" id="1.10.510.10">
    <property type="entry name" value="Transferase(Phosphotransferase) domain 1"/>
    <property type="match status" value="1"/>
</dbReference>
<dbReference type="InterPro" id="IPR045216">
    <property type="entry name" value="CK2_alpha"/>
</dbReference>
<dbReference type="InterPro" id="IPR011009">
    <property type="entry name" value="Kinase-like_dom_sf"/>
</dbReference>
<dbReference type="InterPro" id="IPR000719">
    <property type="entry name" value="Prot_kinase_dom"/>
</dbReference>
<dbReference type="InterPro" id="IPR017441">
    <property type="entry name" value="Protein_kinase_ATP_BS"/>
</dbReference>
<dbReference type="InterPro" id="IPR008271">
    <property type="entry name" value="Ser/Thr_kinase_AS"/>
</dbReference>
<dbReference type="PANTHER" id="PTHR24054">
    <property type="entry name" value="CASEIN KINASE II SUBUNIT ALPHA"/>
    <property type="match status" value="1"/>
</dbReference>
<dbReference type="PANTHER" id="PTHR24054:SF16">
    <property type="entry name" value="CASEIN KINASE II SUBUNIT ALPHA-RELATED"/>
    <property type="match status" value="1"/>
</dbReference>
<dbReference type="Pfam" id="PF00069">
    <property type="entry name" value="Pkinase"/>
    <property type="match status" value="1"/>
</dbReference>
<dbReference type="SMART" id="SM00220">
    <property type="entry name" value="S_TKc"/>
    <property type="match status" value="1"/>
</dbReference>
<dbReference type="SUPFAM" id="SSF56112">
    <property type="entry name" value="Protein kinase-like (PK-like)"/>
    <property type="match status" value="1"/>
</dbReference>
<dbReference type="PROSITE" id="PS00107">
    <property type="entry name" value="PROTEIN_KINASE_ATP"/>
    <property type="match status" value="1"/>
</dbReference>
<dbReference type="PROSITE" id="PS50011">
    <property type="entry name" value="PROTEIN_KINASE_DOM"/>
    <property type="match status" value="1"/>
</dbReference>
<dbReference type="PROSITE" id="PS00108">
    <property type="entry name" value="PROTEIN_KINASE_ST"/>
    <property type="match status" value="1"/>
</dbReference>
<name>CSK23_HUMAN</name>
<evidence type="ECO:0000250" key="1"/>
<evidence type="ECO:0000255" key="2">
    <source>
        <dbReference type="PROSITE-ProRule" id="PRU00159"/>
    </source>
</evidence>
<evidence type="ECO:0000255" key="3">
    <source>
        <dbReference type="PROSITE-ProRule" id="PRU10027"/>
    </source>
</evidence>
<evidence type="ECO:0000269" key="4">
    <source>
    </source>
</evidence>
<evidence type="ECO:0000269" key="5">
    <source>
    </source>
</evidence>
<evidence type="ECO:0000305" key="6"/>
<keyword id="KW-0067">ATP-binding</keyword>
<keyword id="KW-0418">Kinase</keyword>
<keyword id="KW-0547">Nucleotide-binding</keyword>
<keyword id="KW-1267">Proteomics identification</keyword>
<keyword id="KW-0656">Proto-oncogene</keyword>
<keyword id="KW-1185">Reference proteome</keyword>
<keyword id="KW-0723">Serine/threonine-protein kinase</keyword>
<keyword id="KW-0808">Transferase</keyword>
<feature type="chain" id="PRO_0000422194" description="Casein kinase II subunit alpha 3">
    <location>
        <begin position="1"/>
        <end position="391"/>
    </location>
</feature>
<feature type="domain" description="Protein kinase" evidence="2">
    <location>
        <begin position="39"/>
        <end position="324"/>
    </location>
</feature>
<feature type="active site" description="Proton acceptor" evidence="2 3">
    <location>
        <position position="156"/>
    </location>
</feature>
<feature type="binding site" evidence="2">
    <location>
        <begin position="45"/>
        <end position="53"/>
    </location>
    <ligand>
        <name>ATP</name>
        <dbReference type="ChEBI" id="CHEBI:30616"/>
    </ligand>
</feature>
<feature type="binding site" evidence="2">
    <location>
        <position position="68"/>
    </location>
    <ligand>
        <name>ATP</name>
        <dbReference type="ChEBI" id="CHEBI:30616"/>
    </ligand>
</feature>
<feature type="sequence variant" id="VAR_069225" description="In a lung carcinoma sample; somatic mutation; shows greater kinase activity, provides a cell growth advantage and increases its interaction with the PML tumor suppressor protein and PML degradation; dbSNP:rs2071460." evidence="5">
    <original>I</original>
    <variation>T</variation>
    <location>
        <position position="133"/>
    </location>
</feature>
<feature type="sequence conflict" description="In Ref. 1; X64692, 3; AAM52224 and 5; EAW68546." evidence="6" ref="1 3 5">
    <original>L</original>
    <variation>F</variation>
    <location>
        <position position="128"/>
    </location>
</feature>
<feature type="sequence conflict" description="In Ref. 1; X64692, 3; AAM52224 and 5; EAW68546." evidence="6" ref="1 3 5">
    <original>R</original>
    <variation>S</variation>
    <location>
        <position position="217"/>
    </location>
</feature>
<feature type="sequence conflict" description="In Ref. 1; X64692." evidence="6" ref="1">
    <original>R</original>
    <variation>H</variation>
    <location>
        <position position="236"/>
    </location>
</feature>
<feature type="sequence conflict" description="In Ref. 1; X64692, 3; AAM52224 and 5; EAW68546." evidence="6" ref="1 3 5">
    <original>F</original>
    <variation>V</variation>
    <location>
        <position position="248"/>
    </location>
</feature>
<feature type="sequence conflict" description="In Ref. 1; X64692, 3; AAM52224 and 5; EAW68546." evidence="6" ref="1 3 5">
    <original>S</original>
    <variation>R</variation>
    <location>
        <position position="287"/>
    </location>
</feature>
<feature type="sequence conflict" description="In Ref. 1; X64692." evidence="6" ref="1">
    <location>
        <position position="296"/>
    </location>
</feature>
<feature type="sequence conflict" description="In Ref. 1; X64692, 3; AAM52224 and 5; EAW68546." evidence="6" ref="1 3 5">
    <original>T</original>
    <variation>A</variation>
    <location>
        <position position="387"/>
    </location>
</feature>
<reference key="1">
    <citation type="journal article" date="1992" name="Biochim. Biophys. Acta">
        <title>Human casein kinase II subunit alpha: sequence of a processed (pseudo)gene and its localization on chromosome 11.</title>
        <authorList>
            <person name="Wirkner U."/>
            <person name="Voss H."/>
            <person name="Lichter P."/>
            <person name="Weitz S."/>
            <person name="Ansorge W."/>
            <person name="Pyerin W."/>
        </authorList>
    </citation>
    <scope>NUCLEOTIDE SEQUENCE [GENOMIC DNA]</scope>
</reference>
<reference key="2">
    <citation type="journal article" date="1993" name="FEBS Lett.">
        <title>Structure and sequence of an intronless gene for human casein kinase II-alpha subunit.</title>
        <authorList>
            <person name="Devilat I."/>
            <person name="Carvallo P."/>
        </authorList>
    </citation>
    <scope>NUCLEOTIDE SEQUENCE [GENOMIC DNA]</scope>
</reference>
<reference key="3">
    <citation type="journal article" date="2002" name="Biochemistry">
        <title>Sequencing of full-length cDNA encoding the alpha and beta subunits of human casein kinase II from human platelets and megakaryocytic cells. Expression of the casein kinase IIalpha intronless gene in a megakaryocytic cell line.</title>
        <authorList>
            <person name="Singh L.S."/>
            <person name="Kalafatis M."/>
        </authorList>
    </citation>
    <scope>NUCLEOTIDE SEQUENCE [MRNA]</scope>
    <scope>TISSUE SPECIFICITY</scope>
    <source>
        <tissue>Platelet</tissue>
    </source>
</reference>
<reference key="4">
    <citation type="journal article" date="2006" name="Nature">
        <title>Human chromosome 11 DNA sequence and analysis including novel gene identification.</title>
        <authorList>
            <person name="Taylor T.D."/>
            <person name="Noguchi H."/>
            <person name="Totoki Y."/>
            <person name="Toyoda A."/>
            <person name="Kuroki Y."/>
            <person name="Dewar K."/>
            <person name="Lloyd C."/>
            <person name="Itoh T."/>
            <person name="Takeda T."/>
            <person name="Kim D.-W."/>
            <person name="She X."/>
            <person name="Barlow K.F."/>
            <person name="Bloom T."/>
            <person name="Bruford E."/>
            <person name="Chang J.L."/>
            <person name="Cuomo C.A."/>
            <person name="Eichler E."/>
            <person name="FitzGerald M.G."/>
            <person name="Jaffe D.B."/>
            <person name="LaButti K."/>
            <person name="Nicol R."/>
            <person name="Park H.-S."/>
            <person name="Seaman C."/>
            <person name="Sougnez C."/>
            <person name="Yang X."/>
            <person name="Zimmer A.R."/>
            <person name="Zody M.C."/>
            <person name="Birren B.W."/>
            <person name="Nusbaum C."/>
            <person name="Fujiyama A."/>
            <person name="Hattori M."/>
            <person name="Rogers J."/>
            <person name="Lander E.S."/>
            <person name="Sakaki Y."/>
        </authorList>
    </citation>
    <scope>NUCLEOTIDE SEQUENCE [LARGE SCALE GENOMIC DNA]</scope>
</reference>
<reference key="5">
    <citation type="submission" date="2005-09" db="EMBL/GenBank/DDBJ databases">
        <authorList>
            <person name="Mural R.J."/>
            <person name="Istrail S."/>
            <person name="Sutton G.G."/>
            <person name="Florea L."/>
            <person name="Halpern A.L."/>
            <person name="Mobarry C.M."/>
            <person name="Lippert R."/>
            <person name="Walenz B."/>
            <person name="Shatkay H."/>
            <person name="Dew I."/>
            <person name="Miller J.R."/>
            <person name="Flanigan M.J."/>
            <person name="Edwards N.J."/>
            <person name="Bolanos R."/>
            <person name="Fasulo D."/>
            <person name="Halldorsson B.V."/>
            <person name="Hannenhalli S."/>
            <person name="Turner R."/>
            <person name="Yooseph S."/>
            <person name="Lu F."/>
            <person name="Nusskern D.R."/>
            <person name="Shue B.C."/>
            <person name="Zheng X.H."/>
            <person name="Zhong F."/>
            <person name="Delcher A.L."/>
            <person name="Huson D.H."/>
            <person name="Kravitz S.A."/>
            <person name="Mouchard L."/>
            <person name="Reinert K."/>
            <person name="Remington K.A."/>
            <person name="Clark A.G."/>
            <person name="Waterman M.S."/>
            <person name="Eichler E.E."/>
            <person name="Adams M.D."/>
            <person name="Hunkapiller M.W."/>
            <person name="Myers E.W."/>
            <person name="Venter J.C."/>
        </authorList>
    </citation>
    <scope>NUCLEOTIDE SEQUENCE [LARGE SCALE GENOMIC DNA]</scope>
</reference>
<reference key="6">
    <citation type="journal article" date="2010" name="PLoS ONE">
        <title>Functional polymorphism of the CK2alpha intronless gene plays oncogenic roles in lung cancer.</title>
        <authorList>
            <person name="Hung M.S."/>
            <person name="Lin Y.C."/>
            <person name="Mao J.H."/>
            <person name="Kim I.J."/>
            <person name="Xu Z."/>
            <person name="Yang C.T."/>
            <person name="Jablons D.M."/>
            <person name="You L."/>
        </authorList>
    </citation>
    <scope>FUNCTION</scope>
    <scope>CATALYTIC ACTIVITY</scope>
    <scope>INTERACTION WITH PML</scope>
    <scope>VARIANT THR-133</scope>
    <scope>TISSUE SPECIFICITY</scope>
</reference>
<sequence>MSGPVPSRARVYTDVNTHRPREYWDYESHVVEWGNQDDYQLVRKLGRGKYSEVFEAINITNNEKVVVKILKPVKKKKIKREIKILENLRGGPNIITLADIVKDPVSRTPALVFEHVNNTDFKQLYQTLTDYDIRFYMYEILKALDYCHSMGIMHRDVKPHNVMIDHEHRKLRLIDWGLAEFYHPGQEYNVRVASRYFKGPELLVDYQMYDYSLDMWRLGCMLASMIFRKEPFFHGRDNYDQLVRIAKFLGTEDLYGYIDKYNIELDPRFNDILGRHSRKRWERFVHSENQHLVSPEALDFLDKLLRYDHQSRLTAREAMEHPYFYTVVKDQARMGSSSMPGGSTPVSSANVMSGISSVPTPSPLGPLAGSPVIAAANPLGMPVPAATGAQQ</sequence>
<comment type="function">
    <text evidence="5">Probable catalytic subunit of a constitutively active serine/threonine-protein kinase complex that phosphorylates a large number of substrates containing acidic residues C-terminal to the phosphorylated serine or threonine. Amplification-dependent oncogene; promotes cell proliferation and tumorigenesis by down-regulating expression of the tumor suppressor protein, PML. May play a role in the pathogenesis of the lung cancer development and progression.</text>
</comment>
<comment type="catalytic activity">
    <reaction evidence="5">
        <text>L-seryl-[protein] + ATP = O-phospho-L-seryl-[protein] + ADP + H(+)</text>
        <dbReference type="Rhea" id="RHEA:17989"/>
        <dbReference type="Rhea" id="RHEA-COMP:9863"/>
        <dbReference type="Rhea" id="RHEA-COMP:11604"/>
        <dbReference type="ChEBI" id="CHEBI:15378"/>
        <dbReference type="ChEBI" id="CHEBI:29999"/>
        <dbReference type="ChEBI" id="CHEBI:30616"/>
        <dbReference type="ChEBI" id="CHEBI:83421"/>
        <dbReference type="ChEBI" id="CHEBI:456216"/>
        <dbReference type="EC" id="2.7.11.1"/>
    </reaction>
</comment>
<comment type="catalytic activity">
    <reaction evidence="5">
        <text>L-threonyl-[protein] + ATP = O-phospho-L-threonyl-[protein] + ADP + H(+)</text>
        <dbReference type="Rhea" id="RHEA:46608"/>
        <dbReference type="Rhea" id="RHEA-COMP:11060"/>
        <dbReference type="Rhea" id="RHEA-COMP:11605"/>
        <dbReference type="ChEBI" id="CHEBI:15378"/>
        <dbReference type="ChEBI" id="CHEBI:30013"/>
        <dbReference type="ChEBI" id="CHEBI:30616"/>
        <dbReference type="ChEBI" id="CHEBI:61977"/>
        <dbReference type="ChEBI" id="CHEBI:456216"/>
        <dbReference type="EC" id="2.7.11.1"/>
    </reaction>
</comment>
<comment type="subunit">
    <text evidence="1 5">Heterotetramer composed of two catalytic subunits (alpha chain and/or alpha' chain) and two regulatory subunits (beta chains) (By similarity). Interacts with PML.</text>
</comment>
<comment type="tissue specificity">
    <text evidence="4 5">Detected in blood platelets and megakaryocyte cell lines. Poorly expressed in lung. Highly expressed in lung tumor tissues.</text>
</comment>
<comment type="similarity">
    <text evidence="2">Belongs to the protein kinase superfamily. Ser/Thr protein kinase family. CK2 subfamily.</text>
</comment>
<proteinExistence type="evidence at protein level"/>
<gene>
    <name type="primary">CSNK2A3</name>
    <name type="synonym">CSNK2A1P</name>
</gene>
<accession>Q8NEV1</accession>
<organism>
    <name type="scientific">Homo sapiens</name>
    <name type="common">Human</name>
    <dbReference type="NCBI Taxonomy" id="9606"/>
    <lineage>
        <taxon>Eukaryota</taxon>
        <taxon>Metazoa</taxon>
        <taxon>Chordata</taxon>
        <taxon>Craniata</taxon>
        <taxon>Vertebrata</taxon>
        <taxon>Euteleostomi</taxon>
        <taxon>Mammalia</taxon>
        <taxon>Eutheria</taxon>
        <taxon>Euarchontoglires</taxon>
        <taxon>Primates</taxon>
        <taxon>Haplorrhini</taxon>
        <taxon>Catarrhini</taxon>
        <taxon>Hominidae</taxon>
        <taxon>Homo</taxon>
    </lineage>
</organism>
<protein>
    <recommendedName>
        <fullName>Casein kinase II subunit alpha 3</fullName>
        <shortName>CK II alpha 3</shortName>
        <ecNumber>2.7.11.1</ecNumber>
    </recommendedName>
    <alternativeName>
        <fullName>Casein kinase II alpha 1 polypeptide pseudogene</fullName>
    </alternativeName>
</protein>